<organism>
    <name type="scientific">Homo sapiens</name>
    <name type="common">Human</name>
    <dbReference type="NCBI Taxonomy" id="9606"/>
    <lineage>
        <taxon>Eukaryota</taxon>
        <taxon>Metazoa</taxon>
        <taxon>Chordata</taxon>
        <taxon>Craniata</taxon>
        <taxon>Vertebrata</taxon>
        <taxon>Euteleostomi</taxon>
        <taxon>Mammalia</taxon>
        <taxon>Eutheria</taxon>
        <taxon>Euarchontoglires</taxon>
        <taxon>Primates</taxon>
        <taxon>Haplorrhini</taxon>
        <taxon>Catarrhini</taxon>
        <taxon>Hominidae</taxon>
        <taxon>Homo</taxon>
    </lineage>
</organism>
<feature type="signal peptide" evidence="13">
    <location>
        <begin position="1"/>
        <end position="25"/>
    </location>
</feature>
<feature type="chain" id="PRO_0000021156" description="Endoglin">
    <location>
        <begin position="26"/>
        <end position="658"/>
    </location>
</feature>
<feature type="topological domain" description="Extracellular" evidence="2">
    <location>
        <begin position="26"/>
        <end position="586"/>
    </location>
</feature>
<feature type="transmembrane region" description="Helical" evidence="2">
    <location>
        <begin position="587"/>
        <end position="611"/>
    </location>
</feature>
<feature type="topological domain" description="Cytoplasmic" evidence="2">
    <location>
        <begin position="612"/>
        <end position="658"/>
    </location>
</feature>
<feature type="domain" description="ZP" evidence="3 30">
    <location>
        <begin position="363"/>
        <end position="533"/>
    </location>
</feature>
<feature type="region of interest" description="Required for interaction with GDF2" evidence="18 19 21">
    <location>
        <begin position="26"/>
        <end position="337"/>
    </location>
</feature>
<feature type="region of interest" description="OR1, N-terminal part" evidence="21">
    <location>
        <begin position="26"/>
        <end position="46"/>
    </location>
</feature>
<feature type="region of interest" description="OR2" evidence="21">
    <location>
        <begin position="47"/>
        <end position="199"/>
    </location>
</feature>
<feature type="region of interest" description="OR1, C-terminal part" evidence="21">
    <location>
        <begin position="200"/>
        <end position="330"/>
    </location>
</feature>
<feature type="region of interest" description="Essential for interaction with GDF2" evidence="21">
    <location>
        <begin position="270"/>
        <end position="282"/>
    </location>
</feature>
<feature type="region of interest" description="Disordered" evidence="4">
    <location>
        <begin position="626"/>
        <end position="658"/>
    </location>
</feature>
<feature type="short sequence motif" description="Cell attachment site" evidence="2">
    <location>
        <begin position="399"/>
        <end position="401"/>
    </location>
</feature>
<feature type="compositionally biased region" description="Low complexity" evidence="4">
    <location>
        <begin position="626"/>
        <end position="639"/>
    </location>
</feature>
<feature type="compositionally biased region" description="Polar residues" evidence="4">
    <location>
        <begin position="640"/>
        <end position="658"/>
    </location>
</feature>
<feature type="modified residue" description="Phosphoserine; by TGFBR1" evidence="1">
    <location>
        <position position="646"/>
    </location>
</feature>
<feature type="modified residue" description="Phosphoserine; by TGFBR1" evidence="1">
    <location>
        <position position="649"/>
    </location>
</feature>
<feature type="glycosylation site" description="N-linked (GlcNAc...) asparagine" evidence="2">
    <location>
        <position position="88"/>
    </location>
</feature>
<feature type="glycosylation site" description="N-linked (GlcNAc...) asparagine" evidence="2">
    <location>
        <position position="102"/>
    </location>
</feature>
<feature type="glycosylation site" description="N-linked (GlcNAc...) asparagine" evidence="2">
    <location>
        <position position="121"/>
    </location>
</feature>
<feature type="glycosylation site" description="N-linked (GlcNAc...) asparagine" evidence="16">
    <location>
        <position position="134"/>
    </location>
</feature>
<feature type="glycosylation site" description="N-linked (GlcNAc...) asparagine" evidence="2">
    <location>
        <position position="307"/>
    </location>
</feature>
<feature type="disulfide bond" evidence="21 33 34">
    <location>
        <begin position="30"/>
        <end position="207"/>
    </location>
</feature>
<feature type="disulfide bond" evidence="21 33 34">
    <location>
        <begin position="53"/>
        <end position="182"/>
    </location>
</feature>
<feature type="disulfide bond" evidence="21 33">
    <location>
        <begin position="242"/>
        <end position="330"/>
    </location>
</feature>
<feature type="disulfide bond" evidence="21 32">
    <location>
        <begin position="350"/>
        <end position="382"/>
    </location>
</feature>
<feature type="disulfide bond" evidence="21 32">
    <location>
        <begin position="363"/>
        <end position="442"/>
    </location>
</feature>
<feature type="disulfide bond" evidence="21 32">
    <location>
        <begin position="394"/>
        <end position="412"/>
    </location>
</feature>
<feature type="disulfide bond" evidence="21 32">
    <location>
        <begin position="493"/>
        <end position="549"/>
    </location>
</feature>
<feature type="disulfide bond" description="Interchain" evidence="30">
    <location>
        <position position="516"/>
    </location>
</feature>
<feature type="splice variant" id="VSP_004233" description="In isoform Short." evidence="27">
    <original>SPSKREPVVAVAAPASSESSSTNHSIGSTQSTPCSTSSMA</original>
    <variation>EYPRPPQ</variation>
    <location>
        <begin position="619"/>
        <end position="658"/>
    </location>
</feature>
<feature type="sequence variant" id="VAR_005192" description="In dbSNP:rs35400405." evidence="25">
    <original>T</original>
    <variation>M</variation>
    <location>
        <position position="5"/>
    </location>
</feature>
<feature type="sequence variant" id="VAR_026774" description="In HHT1; dbSNP:rs1564466414." evidence="9">
    <original>L</original>
    <variation>P</variation>
    <location>
        <position position="8"/>
    </location>
</feature>
<feature type="sequence variant" id="VAR_070279" description="In HHT1." evidence="12">
    <original>A</original>
    <variation>D</variation>
    <location>
        <position position="11"/>
    </location>
</feature>
<feature type="sequence variant" id="VAR_026775" description="In HHT1; dbSNP:rs1252348200." evidence="9">
    <original>V</original>
    <variation>F</variation>
    <location>
        <position position="49"/>
    </location>
</feature>
<feature type="sequence variant" id="VAR_005193" description="In HHT1; impairs protein folding; abolishes expression at the cell surface." evidence="5 26">
    <original>G</original>
    <variation>V</variation>
    <location>
        <position position="52"/>
    </location>
</feature>
<feature type="sequence variant" id="VAR_005194" description="In HHT1; impairs protein folding; abolishes expression at the cell surface." evidence="5 6 26">
    <original>C</original>
    <variation>R</variation>
    <location>
        <position position="53"/>
    </location>
</feature>
<feature type="sequence variant" id="VAR_070280" description="In HHT1; dbSNP:rs1588585880." evidence="12">
    <original>V</original>
    <variation>D</variation>
    <location>
        <position position="105"/>
    </location>
</feature>
<feature type="sequence variant" id="VAR_026776" description="In HHT1." evidence="9">
    <original>L</original>
    <variation>R</variation>
    <location>
        <position position="107"/>
    </location>
</feature>
<feature type="sequence variant" id="VAR_005195" description="In HHT1; impairs protein folding; nearly abolishes expression at the cell surface; dbSNP:rs878853657." evidence="5 26">
    <original>W</original>
    <variation>C</variation>
    <location>
        <position position="149"/>
    </location>
</feature>
<feature type="sequence variant" id="VAR_070281" description="In HHT1; uncertain significance." evidence="17">
    <original>A</original>
    <variation>P</variation>
    <location>
        <position position="150"/>
    </location>
</feature>
<feature type="sequence variant" id="VAR_009120" description="In HHT1." evidence="24">
    <original>A</original>
    <variation>D</variation>
    <location>
        <position position="160"/>
    </location>
</feature>
<feature type="sequence variant" id="VAR_070282" description="In HHT1." evidence="12">
    <original>A</original>
    <variation>E</variation>
    <location>
        <position position="175"/>
    </location>
</feature>
<feature type="sequence variant" id="VAR_005196" description="In HHT1." evidence="25">
    <location>
        <begin position="192"/>
        <end position="198"/>
    </location>
</feature>
<feature type="sequence variant" id="VAR_070283" description="In HHT1." evidence="11">
    <original>TL</original>
    <variation>VLQ</variation>
    <location>
        <begin position="193"/>
        <end position="194"/>
    </location>
</feature>
<feature type="sequence variant" id="VAR_070284" evidence="17">
    <original>R</original>
    <variation>P</variation>
    <location>
        <position position="205"/>
    </location>
</feature>
<feature type="sequence variant" id="VAR_026777" description="In HHT1." evidence="9">
    <location>
        <position position="207"/>
    </location>
</feature>
<feature type="sequence variant" id="VAR_070285" description="In HHT1; dbSNP:rs1588582695." evidence="12">
    <original>I</original>
    <variation>T</variation>
    <location>
        <position position="220"/>
    </location>
</feature>
<feature type="sequence variant" id="VAR_009121" description="In HHT1; impairs protein folding; strongly reduces expression at the cell surface; dbSNP:rs1554810378." evidence="5 10">
    <original>L</original>
    <variation>P</variation>
    <location>
        <position position="221"/>
    </location>
</feature>
<feature type="sequence variant" id="VAR_070286" description="In HHT1." evidence="17">
    <original>L</original>
    <variation>Q</variation>
    <location>
        <position position="221"/>
    </location>
</feature>
<feature type="sequence variant" id="VAR_026778" description="In HHT1.">
    <location>
        <begin position="232"/>
        <end position="233"/>
    </location>
</feature>
<feature type="sequence variant" id="VAR_070287" description="In HHT1; uncertain significance; dbSNP:rs754136153." evidence="17">
    <original>V</original>
    <variation>M</variation>
    <location>
        <position position="236"/>
    </location>
</feature>
<feature type="sequence variant" id="VAR_070288" description="In HHT1; dbSNP:rs1060501415." evidence="17">
    <original>V</original>
    <variation>E</variation>
    <location>
        <position position="238"/>
    </location>
</feature>
<feature type="sequence variant" id="VAR_070289" description="In HHT1; dbSNP:rs1085307431." evidence="17">
    <original>I</original>
    <variation>S</variation>
    <location>
        <position position="263"/>
    </location>
</feature>
<feature type="sequence variant" id="VAR_026780" description="In HHT1; dbSNP:rs1085307431." evidence="9">
    <original>I</original>
    <variation>T</variation>
    <location>
        <position position="263"/>
    </location>
</feature>
<feature type="sequence variant" id="VAR_026779" description="In HHT1; dbSNP:rs1830579035." evidence="9 10">
    <location>
        <position position="263"/>
    </location>
</feature>
<feature type="sequence variant" id="VAR_070290" description="In HHT1; dbSNP:rs752331196." evidence="17">
    <original>M</original>
    <variation>R</variation>
    <location>
        <position position="269"/>
    </location>
</feature>
<feature type="sequence variant" id="VAR_005197" description="In HHT1." evidence="26">
    <original>L</original>
    <variation>P</variation>
    <location>
        <position position="306"/>
    </location>
</feature>
<feature type="sequence variant" id="VAR_070291" description="In HHT1; dbSNP:rs1482440395." evidence="12">
    <original>A</original>
    <variation>D</variation>
    <location>
        <position position="308"/>
    </location>
</feature>
<feature type="sequence variant" id="VAR_070292" description="In HHT1; uncertain significance; dbSNP:rs763508329." evidence="17">
    <original>V</original>
    <variation>M</variation>
    <location>
        <position position="315"/>
    </location>
</feature>
<feature type="sequence variant" id="VAR_070293" description="In HHT1; dbSNP:rs1588580782." evidence="12">
    <original>C</original>
    <variation>S</variation>
    <location>
        <position position="363"/>
    </location>
</feature>
<feature type="sequence variant" id="VAR_014764" description="In dbSNP:rs1800956.">
    <original>D</original>
    <variation>H</variation>
    <location>
        <position position="366"/>
    </location>
</feature>
<feature type="sequence variant" id="VAR_070294" description="In HHT1; uncertain significance." evidence="17">
    <original>K</original>
    <variation>E</variation>
    <location>
        <position position="374"/>
    </location>
</feature>
<feature type="sequence variant" id="VAR_070295" description="In HHT1; dbSNP:rs1830434129." evidence="17">
    <original>C</original>
    <variation>Y</variation>
    <location>
        <position position="394"/>
    </location>
</feature>
<feature type="sequence variant" id="VAR_026781" description="In HHT1." evidence="9">
    <original>C</original>
    <variation>S</variation>
    <location>
        <position position="412"/>
    </location>
</feature>
<feature type="sequence variant" id="VAR_037140" description="In HHT1; dbSNP:rs121918401." evidence="7">
    <original>G</original>
    <variation>V</variation>
    <location>
        <position position="413"/>
    </location>
</feature>
<feature type="sequence variant" id="VAR_070296" description="In HHT1; uncertain significance; dbSNP:rs1830432509." evidence="17">
    <original>M</original>
    <variation>R</variation>
    <location>
        <position position="414"/>
    </location>
</feature>
<feature type="sequence variant" id="VAR_070297" description="In HHT1; dbSNP:rs1434169817." evidence="12">
    <original>R</original>
    <variation>W</variation>
    <location>
        <position position="437"/>
    </location>
</feature>
<feature type="sequence variant" id="VAR_070298" description="In HHT1; dbSNP:rs763475207." evidence="12">
    <original>L</original>
    <variation>S</variation>
    <location>
        <position position="490"/>
    </location>
</feature>
<feature type="sequence variant" id="VAR_026782" description="In HHT1; likely benign; dbSNP:rs116330805." evidence="9">
    <original>V</original>
    <variation>M</variation>
    <location>
        <position position="504"/>
    </location>
</feature>
<feature type="sequence variant" id="VAR_070299" description="In HHT1; dbSNP:rs863223538." evidence="12">
    <original>R</original>
    <variation>H</variation>
    <location>
        <position position="529"/>
    </location>
</feature>
<feature type="sequence variant" id="VAR_070300" description="In HHT1." evidence="17">
    <original>R</original>
    <variation>P</variation>
    <location>
        <position position="529"/>
    </location>
</feature>
<feature type="sequence variant" id="VAR_070301" description="In HHT1." evidence="11">
    <original>G</original>
    <variation>D</variation>
    <location>
        <position position="545"/>
    </location>
</feature>
<feature type="sequence variant" id="VAR_070302" description="In dbSNP:rs142896669." evidence="17">
    <original>G</original>
    <variation>S</variation>
    <location>
        <position position="545"/>
    </location>
</feature>
<feature type="sequence variant" id="VAR_070303" description="In HHT1." evidence="12">
    <original>L</original>
    <variation>P</variation>
    <location>
        <position position="547"/>
    </location>
</feature>
<feature type="sequence variant" id="VAR_070304" description="In HHT1; uncertain significance; dbSNP:rs1060501421." evidence="17">
    <original>C</original>
    <variation>Y</variation>
    <location>
        <position position="549"/>
    </location>
</feature>
<feature type="sequence variant" id="VAR_070305" description="In dbSNP:rs375965489." evidence="17">
    <original>D</original>
    <variation>A</variation>
    <location>
        <position position="561"/>
    </location>
</feature>
<feature type="sequence variant" id="VAR_070306" description="In HHT1; dbSNP:rs1830302008." evidence="17">
    <original>G</original>
    <variation>R</variation>
    <location>
        <position position="603"/>
    </location>
</feature>
<feature type="sequence variant" id="VAR_070307" description="In HHT1." evidence="12">
    <original>A</original>
    <variation>D</variation>
    <location>
        <position position="604"/>
    </location>
</feature>
<feature type="sequence variant" id="VAR_026783" description="In dbSNP:rs148002300." evidence="10">
    <original>S</original>
    <variation>L</variation>
    <location>
        <position position="615"/>
    </location>
</feature>
<feature type="mutagenesis site" description="No effect on interaction with GDF2." evidence="21">
    <original>D</original>
    <variation>A</variation>
    <location>
        <position position="246"/>
    </location>
</feature>
<feature type="mutagenesis site" description="Impairs protein folding, but does not abolish interaction with GDF2." evidence="21">
    <original>M</original>
    <variation>A</variation>
    <location>
        <position position="269"/>
    </location>
</feature>
<feature type="mutagenesis site" description="Loss of interaction with GDF2." evidence="21">
    <original>QI</original>
    <variation>AA</variation>
    <location>
        <begin position="270"/>
        <end position="271"/>
    </location>
</feature>
<feature type="mutagenesis site" description="No effect on interaction with GDF2." evidence="21">
    <original>Y</original>
    <variation>A</variation>
    <location>
        <position position="277"/>
    </location>
</feature>
<feature type="mutagenesis site" description="Loss of interaction with GDF2." evidence="21">
    <original>S</original>
    <variation>P</variation>
    <location>
        <position position="278"/>
    </location>
</feature>
<feature type="mutagenesis site" description="Loss of interaction with GDF2." evidence="21">
    <original>F</original>
    <variation>V</variation>
    <location>
        <position position="282"/>
    </location>
</feature>
<feature type="mutagenesis site" description="No effect on interaction with GDF2." evidence="21">
    <original>F</original>
    <variation>A</variation>
    <location>
        <position position="290"/>
    </location>
</feature>
<feature type="mutagenesis site" description="Impairs protein folding. Impairs protein folding; when associated with C-382." evidence="21">
    <original>C</original>
    <variation>S</variation>
    <location>
        <position position="350"/>
    </location>
</feature>
<feature type="mutagenesis site" description="Impairs protein folding. Impairs protein folding; when associated with C-350." evidence="21">
    <original>C</original>
    <variation>S</variation>
    <location>
        <position position="382"/>
    </location>
</feature>
<feature type="mutagenesis site" description="Loss of dimerization via ZP domain." evidence="21">
    <original>C</original>
    <variation>S</variation>
    <location>
        <position position="516"/>
    </location>
</feature>
<feature type="mutagenesis site" description="Loss of interaction with ARRB2." evidence="15">
    <original>T</original>
    <variation>A</variation>
    <location>
        <position position="650"/>
    </location>
</feature>
<feature type="sequence conflict" description="In Ref. 4; AA sequence." evidence="28" ref="4">
    <original>L</original>
    <variation>G</variation>
    <location>
        <position position="14"/>
    </location>
</feature>
<feature type="sequence conflict" description="In Ref. 5." evidence="28" ref="5">
    <original>SSLVTFQEP</original>
    <variation>FQPGHLPRA</variation>
    <location>
        <begin position="122"/>
        <end position="130"/>
    </location>
</feature>
<feature type="turn" evidence="36">
    <location>
        <begin position="37"/>
        <end position="39"/>
    </location>
</feature>
<feature type="strand" evidence="36">
    <location>
        <begin position="40"/>
        <end position="54"/>
    </location>
</feature>
<feature type="strand" evidence="36">
    <location>
        <begin position="61"/>
        <end position="70"/>
    </location>
</feature>
<feature type="strand" evidence="36">
    <location>
        <begin position="76"/>
        <end position="83"/>
    </location>
</feature>
<feature type="strand" evidence="36">
    <location>
        <begin position="94"/>
        <end position="103"/>
    </location>
</feature>
<feature type="strand" evidence="36">
    <location>
        <begin position="105"/>
        <end position="111"/>
    </location>
</feature>
<feature type="strand" evidence="36">
    <location>
        <begin position="116"/>
        <end position="120"/>
    </location>
</feature>
<feature type="turn" evidence="36">
    <location>
        <begin position="122"/>
        <end position="124"/>
    </location>
</feature>
<feature type="strand" evidence="36">
    <location>
        <begin position="125"/>
        <end position="129"/>
    </location>
</feature>
<feature type="strand" evidence="36">
    <location>
        <begin position="132"/>
        <end position="137"/>
    </location>
</feature>
<feature type="helix" evidence="36">
    <location>
        <begin position="143"/>
        <end position="151"/>
    </location>
</feature>
<feature type="strand" evidence="36">
    <location>
        <begin position="156"/>
        <end position="171"/>
    </location>
</feature>
<feature type="strand" evidence="36">
    <location>
        <begin position="185"/>
        <end position="189"/>
    </location>
</feature>
<feature type="strand" evidence="36">
    <location>
        <begin position="193"/>
        <end position="200"/>
    </location>
</feature>
<feature type="strand" evidence="36">
    <location>
        <begin position="205"/>
        <end position="208"/>
    </location>
</feature>
<feature type="strand" evidence="36">
    <location>
        <begin position="217"/>
        <end position="224"/>
    </location>
</feature>
<feature type="strand" evidence="36">
    <location>
        <begin position="232"/>
        <end position="240"/>
    </location>
</feature>
<feature type="strand" evidence="36">
    <location>
        <begin position="249"/>
        <end position="254"/>
    </location>
</feature>
<feature type="strand" evidence="36">
    <location>
        <begin position="259"/>
        <end position="267"/>
    </location>
</feature>
<feature type="strand" evidence="36">
    <location>
        <begin position="270"/>
        <end position="279"/>
    </location>
</feature>
<feature type="helix" evidence="36">
    <location>
        <begin position="296"/>
        <end position="305"/>
    </location>
</feature>
<feature type="strand" evidence="36">
    <location>
        <begin position="309"/>
        <end position="327"/>
    </location>
</feature>
<feature type="helix" evidence="35">
    <location>
        <begin position="352"/>
        <end position="358"/>
    </location>
</feature>
<feature type="strand" evidence="35">
    <location>
        <begin position="360"/>
        <end position="363"/>
    </location>
</feature>
<feature type="strand" evidence="35">
    <location>
        <begin position="365"/>
        <end position="373"/>
    </location>
</feature>
<feature type="helix" evidence="35">
    <location>
        <begin position="374"/>
        <end position="379"/>
    </location>
</feature>
<feature type="strand" evidence="35">
    <location>
        <begin position="384"/>
        <end position="388"/>
    </location>
</feature>
<feature type="strand" evidence="35">
    <location>
        <begin position="400"/>
        <end position="408"/>
    </location>
</feature>
<feature type="strand" evidence="35">
    <location>
        <begin position="415"/>
        <end position="417"/>
    </location>
</feature>
<feature type="strand" evidence="35">
    <location>
        <begin position="420"/>
        <end position="431"/>
    </location>
</feature>
<feature type="strand" evidence="35">
    <location>
        <begin position="436"/>
        <end position="443"/>
    </location>
</feature>
<feature type="turn" evidence="35">
    <location>
        <begin position="445"/>
        <end position="447"/>
    </location>
</feature>
<feature type="strand" evidence="35">
    <location>
        <begin position="448"/>
        <end position="459"/>
    </location>
</feature>
<feature type="strand" evidence="35">
    <location>
        <begin position="465"/>
        <end position="467"/>
    </location>
</feature>
<feature type="strand" evidence="35">
    <location>
        <begin position="473"/>
        <end position="481"/>
    </location>
</feature>
<feature type="strand" evidence="35">
    <location>
        <begin position="484"/>
        <end position="496"/>
    </location>
</feature>
<feature type="turn" evidence="35">
    <location>
        <begin position="499"/>
        <end position="501"/>
    </location>
</feature>
<feature type="strand" evidence="35">
    <location>
        <begin position="503"/>
        <end position="508"/>
    </location>
</feature>
<feature type="strand" evidence="35">
    <location>
        <begin position="517"/>
        <end position="519"/>
    </location>
</feature>
<feature type="strand" evidence="35">
    <location>
        <begin position="524"/>
        <end position="526"/>
    </location>
</feature>
<feature type="strand" evidence="35">
    <location>
        <begin position="529"/>
        <end position="532"/>
    </location>
</feature>
<feature type="strand" evidence="35">
    <location>
        <begin position="538"/>
        <end position="540"/>
    </location>
</feature>
<feature type="strand" evidence="35">
    <location>
        <begin position="543"/>
        <end position="555"/>
    </location>
</feature>
<feature type="helix" evidence="35">
    <location>
        <begin position="560"/>
        <end position="562"/>
    </location>
</feature>
<feature type="strand" evidence="35">
    <location>
        <begin position="564"/>
        <end position="574"/>
    </location>
</feature>
<evidence type="ECO:0000250" key="1">
    <source>
        <dbReference type="UniProtKB" id="Q63961"/>
    </source>
</evidence>
<evidence type="ECO:0000255" key="2"/>
<evidence type="ECO:0000255" key="3">
    <source>
        <dbReference type="PROSITE-ProRule" id="PRU00375"/>
    </source>
</evidence>
<evidence type="ECO:0000256" key="4">
    <source>
        <dbReference type="SAM" id="MobiDB-lite"/>
    </source>
</evidence>
<evidence type="ECO:0000269" key="5">
    <source>
    </source>
</evidence>
<evidence type="ECO:0000269" key="6">
    <source>
    </source>
</evidence>
<evidence type="ECO:0000269" key="7">
    <source>
    </source>
</evidence>
<evidence type="ECO:0000269" key="8">
    <source>
    </source>
</evidence>
<evidence type="ECO:0000269" key="9">
    <source>
    </source>
</evidence>
<evidence type="ECO:0000269" key="10">
    <source>
    </source>
</evidence>
<evidence type="ECO:0000269" key="11">
    <source>
    </source>
</evidence>
<evidence type="ECO:0000269" key="12">
    <source>
    </source>
</evidence>
<evidence type="ECO:0000269" key="13">
    <source>
    </source>
</evidence>
<evidence type="ECO:0000269" key="14">
    <source>
    </source>
</evidence>
<evidence type="ECO:0000269" key="15">
    <source>
    </source>
</evidence>
<evidence type="ECO:0000269" key="16">
    <source>
    </source>
</evidence>
<evidence type="ECO:0000269" key="17">
    <source>
    </source>
</evidence>
<evidence type="ECO:0000269" key="18">
    <source>
    </source>
</evidence>
<evidence type="ECO:0000269" key="19">
    <source>
    </source>
</evidence>
<evidence type="ECO:0000269" key="20">
    <source>
    </source>
</evidence>
<evidence type="ECO:0000269" key="21">
    <source>
    </source>
</evidence>
<evidence type="ECO:0000269" key="22">
    <source>
    </source>
</evidence>
<evidence type="ECO:0000269" key="23">
    <source>
    </source>
</evidence>
<evidence type="ECO:0000269" key="24">
    <source>
    </source>
</evidence>
<evidence type="ECO:0000269" key="25">
    <source>
    </source>
</evidence>
<evidence type="ECO:0000269" key="26">
    <source>
    </source>
</evidence>
<evidence type="ECO:0000303" key="27">
    <source>
    </source>
</evidence>
<evidence type="ECO:0000305" key="28"/>
<evidence type="ECO:0000305" key="29">
    <source>
    </source>
</evidence>
<evidence type="ECO:0000305" key="30">
    <source>
    </source>
</evidence>
<evidence type="ECO:0000305" key="31">
    <source>
    </source>
</evidence>
<evidence type="ECO:0007744" key="32">
    <source>
        <dbReference type="PDB" id="5HZV"/>
    </source>
</evidence>
<evidence type="ECO:0007744" key="33">
    <source>
        <dbReference type="PDB" id="5HZW"/>
    </source>
</evidence>
<evidence type="ECO:0007744" key="34">
    <source>
        <dbReference type="PDB" id="5I04"/>
    </source>
</evidence>
<evidence type="ECO:0007829" key="35">
    <source>
        <dbReference type="PDB" id="5HZV"/>
    </source>
</evidence>
<evidence type="ECO:0007829" key="36">
    <source>
        <dbReference type="PDB" id="5I04"/>
    </source>
</evidence>
<accession>P17813</accession>
<accession>Q14248</accession>
<accession>Q14926</accession>
<accession>Q5T9C0</accession>
<dbReference type="EMBL" id="X72012">
    <property type="protein sequence ID" value="CAA50891.1"/>
    <property type="molecule type" value="mRNA"/>
</dbReference>
<dbReference type="EMBL" id="AL157935">
    <property type="status" value="NOT_ANNOTATED_CDS"/>
    <property type="molecule type" value="Genomic_DNA"/>
</dbReference>
<dbReference type="EMBL" id="AL162586">
    <property type="status" value="NOT_ANNOTATED_CDS"/>
    <property type="molecule type" value="Genomic_DNA"/>
</dbReference>
<dbReference type="EMBL" id="CH471090">
    <property type="protein sequence ID" value="EAW87702.1"/>
    <property type="molecule type" value="Genomic_DNA"/>
</dbReference>
<dbReference type="EMBL" id="J05481">
    <property type="protein sequence ID" value="AAA35800.1"/>
    <property type="molecule type" value="mRNA"/>
</dbReference>
<dbReference type="EMBL" id="U37439">
    <property type="protein sequence ID" value="AAC63386.1"/>
    <property type="molecule type" value="Genomic_DNA"/>
</dbReference>
<dbReference type="EMBL" id="AF036969">
    <property type="protein sequence ID" value="AAC63386.1"/>
    <property type="status" value="JOINED"/>
    <property type="molecule type" value="Genomic_DNA"/>
</dbReference>
<dbReference type="EMBL" id="U37447">
    <property type="protein sequence ID" value="AAC63386.1"/>
    <property type="status" value="JOINED"/>
    <property type="molecule type" value="Genomic_DNA"/>
</dbReference>
<dbReference type="EMBL" id="AF036970">
    <property type="protein sequence ID" value="AAC63386.1"/>
    <property type="status" value="JOINED"/>
    <property type="molecule type" value="Genomic_DNA"/>
</dbReference>
<dbReference type="EMBL" id="U37446">
    <property type="protein sequence ID" value="AAC63386.1"/>
    <property type="status" value="JOINED"/>
    <property type="molecule type" value="Genomic_DNA"/>
</dbReference>
<dbReference type="EMBL" id="U37445">
    <property type="protein sequence ID" value="AAC63386.1"/>
    <property type="status" value="JOINED"/>
    <property type="molecule type" value="Genomic_DNA"/>
</dbReference>
<dbReference type="EMBL" id="AF036971">
    <property type="protein sequence ID" value="AAC63386.1"/>
    <property type="status" value="JOINED"/>
    <property type="molecule type" value="Genomic_DNA"/>
</dbReference>
<dbReference type="EMBL" id="U37442">
    <property type="protein sequence ID" value="AAC63386.1"/>
    <property type="status" value="JOINED"/>
    <property type="molecule type" value="Genomic_DNA"/>
</dbReference>
<dbReference type="EMBL" id="U37441">
    <property type="protein sequence ID" value="AAC63386.1"/>
    <property type="status" value="JOINED"/>
    <property type="molecule type" value="Genomic_DNA"/>
</dbReference>
<dbReference type="CCDS" id="CCDS48029.1">
    <molecule id="P17813-1"/>
</dbReference>
<dbReference type="CCDS" id="CCDS6880.1">
    <molecule id="P17813-2"/>
</dbReference>
<dbReference type="PIR" id="S50831">
    <property type="entry name" value="S50831"/>
</dbReference>
<dbReference type="RefSeq" id="NP_000109.1">
    <molecule id="P17813-2"/>
    <property type="nucleotide sequence ID" value="NM_000118.4"/>
</dbReference>
<dbReference type="RefSeq" id="NP_001108225.1">
    <molecule id="P17813-1"/>
    <property type="nucleotide sequence ID" value="NM_001114753.3"/>
</dbReference>
<dbReference type="RefSeq" id="NP_001265067.1">
    <property type="nucleotide sequence ID" value="NM_001278138.1"/>
</dbReference>
<dbReference type="PDB" id="5HZV">
    <property type="method" value="X-ray"/>
    <property type="resolution" value="2.70 A"/>
    <property type="chains" value="A=338-581"/>
</dbReference>
<dbReference type="PDB" id="5HZW">
    <property type="method" value="X-ray"/>
    <property type="resolution" value="4.45 A"/>
    <property type="chains" value="A=26-337"/>
</dbReference>
<dbReference type="PDB" id="5I04">
    <property type="method" value="X-ray"/>
    <property type="resolution" value="2.42 A"/>
    <property type="chains" value="A=26-337"/>
</dbReference>
<dbReference type="PDBsum" id="5HZV"/>
<dbReference type="PDBsum" id="5HZW"/>
<dbReference type="PDBsum" id="5I04"/>
<dbReference type="SASBDB" id="P17813"/>
<dbReference type="SMR" id="P17813"/>
<dbReference type="BioGRID" id="108337">
    <property type="interactions" value="207"/>
</dbReference>
<dbReference type="CORUM" id="P17813"/>
<dbReference type="DIP" id="DIP-6246N"/>
<dbReference type="FunCoup" id="P17813">
    <property type="interactions" value="69"/>
</dbReference>
<dbReference type="IntAct" id="P17813">
    <property type="interactions" value="225"/>
</dbReference>
<dbReference type="MINT" id="P17813"/>
<dbReference type="STRING" id="9606.ENSP00000362299"/>
<dbReference type="ChEMBL" id="CHEMBL3712885"/>
<dbReference type="DrugBank" id="DB06322">
    <property type="generic name" value="Carotuximab"/>
</dbReference>
<dbReference type="GuidetoPHARMACOLOGY" id="2895"/>
<dbReference type="GlyCosmos" id="P17813">
    <property type="glycosylation" value="9 sites, 2 glycans"/>
</dbReference>
<dbReference type="GlyGen" id="P17813">
    <property type="glycosylation" value="10 sites, 2 N-linked glycans (1 site), 4 O-linked glycans (5 sites)"/>
</dbReference>
<dbReference type="iPTMnet" id="P17813"/>
<dbReference type="PhosphoSitePlus" id="P17813"/>
<dbReference type="SwissPalm" id="P17813"/>
<dbReference type="BioMuta" id="ENG"/>
<dbReference type="DMDM" id="3041681"/>
<dbReference type="jPOST" id="P17813"/>
<dbReference type="MassIVE" id="P17813"/>
<dbReference type="PaxDb" id="9606-ENSP00000362299"/>
<dbReference type="PeptideAtlas" id="P17813"/>
<dbReference type="ProteomicsDB" id="53517">
    <molecule id="P17813-1"/>
</dbReference>
<dbReference type="ProteomicsDB" id="53518">
    <molecule id="P17813-2"/>
</dbReference>
<dbReference type="Pumba" id="P17813"/>
<dbReference type="ABCD" id="P17813">
    <property type="antibodies" value="2 sequenced antibodies"/>
</dbReference>
<dbReference type="Antibodypedia" id="2321">
    <property type="antibodies" value="2535 antibodies from 54 providers"/>
</dbReference>
<dbReference type="DNASU" id="2022"/>
<dbReference type="Ensembl" id="ENST00000344849.5">
    <molecule id="P17813-2"/>
    <property type="protein sequence ID" value="ENSP00000341917.3"/>
    <property type="gene ID" value="ENSG00000106991.15"/>
</dbReference>
<dbReference type="Ensembl" id="ENST00000373203.9">
    <molecule id="P17813-1"/>
    <property type="protein sequence ID" value="ENSP00000362299.4"/>
    <property type="gene ID" value="ENSG00000106991.15"/>
</dbReference>
<dbReference type="GeneID" id="2022"/>
<dbReference type="KEGG" id="hsa:2022"/>
<dbReference type="MANE-Select" id="ENST00000373203.9">
    <property type="protein sequence ID" value="ENSP00000362299.4"/>
    <property type="RefSeq nucleotide sequence ID" value="NM_001114753.3"/>
    <property type="RefSeq protein sequence ID" value="NP_001108225.1"/>
</dbReference>
<dbReference type="UCSC" id="uc004bsj.6">
    <molecule id="P17813-1"/>
    <property type="organism name" value="human"/>
</dbReference>
<dbReference type="AGR" id="HGNC:3349"/>
<dbReference type="CTD" id="2022"/>
<dbReference type="DisGeNET" id="2022"/>
<dbReference type="GeneCards" id="ENG"/>
<dbReference type="GeneReviews" id="ENG"/>
<dbReference type="HGNC" id="HGNC:3349">
    <property type="gene designation" value="ENG"/>
</dbReference>
<dbReference type="HPA" id="ENSG00000106991">
    <property type="expression patterns" value="Tissue enhanced (heart)"/>
</dbReference>
<dbReference type="MalaCards" id="ENG"/>
<dbReference type="MIM" id="131195">
    <property type="type" value="gene"/>
</dbReference>
<dbReference type="MIM" id="187300">
    <property type="type" value="phenotype"/>
</dbReference>
<dbReference type="neXtProt" id="NX_P17813"/>
<dbReference type="OpenTargets" id="ENSG00000106991"/>
<dbReference type="Orphanet" id="231160">
    <property type="disease" value="Familial cerebral saccular aneurysm"/>
</dbReference>
<dbReference type="Orphanet" id="329971">
    <property type="disease" value="Generalized juvenile polyposis/juvenile polyposis coli"/>
</dbReference>
<dbReference type="Orphanet" id="774">
    <property type="disease" value="Hereditary hemorrhagic telangiectasia"/>
</dbReference>
<dbReference type="Orphanet" id="275777">
    <property type="disease" value="Heritable pulmonary arterial hypertension"/>
</dbReference>
<dbReference type="PharmGKB" id="PA27785"/>
<dbReference type="VEuPathDB" id="HostDB:ENSG00000106991"/>
<dbReference type="eggNOG" id="ENOG502RZQ9">
    <property type="taxonomic scope" value="Eukaryota"/>
</dbReference>
<dbReference type="GeneTree" id="ENSGT00530000063861"/>
<dbReference type="InParanoid" id="P17813"/>
<dbReference type="OMA" id="QCEIPRE"/>
<dbReference type="OrthoDB" id="10072329at2759"/>
<dbReference type="PAN-GO" id="P17813">
    <property type="GO annotations" value="11 GO annotations based on evolutionary models"/>
</dbReference>
<dbReference type="PhylomeDB" id="P17813"/>
<dbReference type="TreeFam" id="TF337375"/>
<dbReference type="PathwayCommons" id="P17813"/>
<dbReference type="SignaLink" id="P17813"/>
<dbReference type="SIGNOR" id="P17813"/>
<dbReference type="BioGRID-ORCS" id="2022">
    <property type="hits" value="14 hits in 1157 CRISPR screens"/>
</dbReference>
<dbReference type="ChiTaRS" id="ENG">
    <property type="organism name" value="human"/>
</dbReference>
<dbReference type="GeneWiki" id="Endoglin"/>
<dbReference type="GenomeRNAi" id="2022"/>
<dbReference type="Pharos" id="P17813">
    <property type="development level" value="Tbio"/>
</dbReference>
<dbReference type="PRO" id="PR:P17813"/>
<dbReference type="Proteomes" id="UP000005640">
    <property type="component" value="Chromosome 9"/>
</dbReference>
<dbReference type="RNAct" id="P17813">
    <property type="molecule type" value="protein"/>
</dbReference>
<dbReference type="Bgee" id="ENSG00000106991">
    <property type="expression patterns" value="Expressed in right lung and 187 other cell types or tissues"/>
</dbReference>
<dbReference type="ExpressionAtlas" id="P17813">
    <property type="expression patterns" value="baseline and differential"/>
</dbReference>
<dbReference type="GO" id="GO:0009986">
    <property type="term" value="C:cell surface"/>
    <property type="evidence" value="ECO:0000314"/>
    <property type="project" value="BHF-UCL"/>
</dbReference>
<dbReference type="GO" id="GO:0072563">
    <property type="term" value="C:endothelial microparticle"/>
    <property type="evidence" value="ECO:0007669"/>
    <property type="project" value="Ensembl"/>
</dbReference>
<dbReference type="GO" id="GO:0009897">
    <property type="term" value="C:external side of plasma membrane"/>
    <property type="evidence" value="ECO:0000314"/>
    <property type="project" value="BHF-UCL"/>
</dbReference>
<dbReference type="GO" id="GO:0005615">
    <property type="term" value="C:extracellular space"/>
    <property type="evidence" value="ECO:0000314"/>
    <property type="project" value="BHF-UCL"/>
</dbReference>
<dbReference type="GO" id="GO:0005925">
    <property type="term" value="C:focal adhesion"/>
    <property type="evidence" value="ECO:0007005"/>
    <property type="project" value="UniProtKB"/>
</dbReference>
<dbReference type="GO" id="GO:0016604">
    <property type="term" value="C:nuclear body"/>
    <property type="evidence" value="ECO:0000314"/>
    <property type="project" value="HPA"/>
</dbReference>
<dbReference type="GO" id="GO:0005886">
    <property type="term" value="C:plasma membrane"/>
    <property type="evidence" value="ECO:0000314"/>
    <property type="project" value="HPA"/>
</dbReference>
<dbReference type="GO" id="GO:0043235">
    <property type="term" value="C:receptor complex"/>
    <property type="evidence" value="ECO:0000353"/>
    <property type="project" value="BHF-UCL"/>
</dbReference>
<dbReference type="GO" id="GO:0048185">
    <property type="term" value="F:activin binding"/>
    <property type="evidence" value="ECO:0000304"/>
    <property type="project" value="BHF-UCL"/>
</dbReference>
<dbReference type="GO" id="GO:0015026">
    <property type="term" value="F:coreceptor activity"/>
    <property type="evidence" value="ECO:0000314"/>
    <property type="project" value="BHF-UCL"/>
</dbReference>
<dbReference type="GO" id="GO:0005534">
    <property type="term" value="F:galactose binding"/>
    <property type="evidence" value="ECO:0000314"/>
    <property type="project" value="BHF-UCL"/>
</dbReference>
<dbReference type="GO" id="GO:0005539">
    <property type="term" value="F:glycosaminoglycan binding"/>
    <property type="evidence" value="ECO:0000314"/>
    <property type="project" value="BHF-UCL"/>
</dbReference>
<dbReference type="GO" id="GO:0042802">
    <property type="term" value="F:identical protein binding"/>
    <property type="evidence" value="ECO:0000353"/>
    <property type="project" value="IntAct"/>
</dbReference>
<dbReference type="GO" id="GO:0042803">
    <property type="term" value="F:protein homodimerization activity"/>
    <property type="evidence" value="ECO:0000353"/>
    <property type="project" value="BHF-UCL"/>
</dbReference>
<dbReference type="GO" id="GO:0030546">
    <property type="term" value="F:signaling receptor activator activity"/>
    <property type="evidence" value="ECO:0000314"/>
    <property type="project" value="BHF-UCL"/>
</dbReference>
<dbReference type="GO" id="GO:0050431">
    <property type="term" value="F:transforming growth factor beta binding"/>
    <property type="evidence" value="ECO:0000353"/>
    <property type="project" value="BHF-UCL"/>
</dbReference>
<dbReference type="GO" id="GO:0004888">
    <property type="term" value="F:transmembrane signaling receptor activity"/>
    <property type="evidence" value="ECO:0000303"/>
    <property type="project" value="BHF-UCL"/>
</dbReference>
<dbReference type="GO" id="GO:0034713">
    <property type="term" value="F:type I transforming growth factor beta receptor binding"/>
    <property type="evidence" value="ECO:0000353"/>
    <property type="project" value="BHF-UCL"/>
</dbReference>
<dbReference type="GO" id="GO:0005114">
    <property type="term" value="F:type II transforming growth factor beta receptor binding"/>
    <property type="evidence" value="ECO:0000353"/>
    <property type="project" value="BHF-UCL"/>
</dbReference>
<dbReference type="GO" id="GO:0048844">
    <property type="term" value="P:artery morphogenesis"/>
    <property type="evidence" value="ECO:0000250"/>
    <property type="project" value="BHF-UCL"/>
</dbReference>
<dbReference type="GO" id="GO:0055009">
    <property type="term" value="P:atrial cardiac muscle tissue morphogenesis"/>
    <property type="evidence" value="ECO:0000250"/>
    <property type="project" value="BHF-UCL"/>
</dbReference>
<dbReference type="GO" id="GO:1905222">
    <property type="term" value="P:atrioventricular canal morphogenesis"/>
    <property type="evidence" value="ECO:0000250"/>
    <property type="project" value="BHF-UCL"/>
</dbReference>
<dbReference type="GO" id="GO:0030509">
    <property type="term" value="P:BMP signaling pathway"/>
    <property type="evidence" value="ECO:0000304"/>
    <property type="project" value="BHF-UCL"/>
</dbReference>
<dbReference type="GO" id="GO:0001569">
    <property type="term" value="P:branching involved in blood vessel morphogenesis"/>
    <property type="evidence" value="ECO:0000250"/>
    <property type="project" value="BHF-UCL"/>
</dbReference>
<dbReference type="GO" id="GO:0003209">
    <property type="term" value="P:cardiac atrium morphogenesis"/>
    <property type="evidence" value="ECO:0000250"/>
    <property type="project" value="BHF-UCL"/>
</dbReference>
<dbReference type="GO" id="GO:0003208">
    <property type="term" value="P:cardiac ventricle morphogenesis"/>
    <property type="evidence" value="ECO:0000250"/>
    <property type="project" value="BHF-UCL"/>
</dbReference>
<dbReference type="GO" id="GO:0007155">
    <property type="term" value="P:cell adhesion"/>
    <property type="evidence" value="ECO:0007669"/>
    <property type="project" value="UniProtKB-KW"/>
</dbReference>
<dbReference type="GO" id="GO:0060326">
    <property type="term" value="P:cell chemotaxis"/>
    <property type="evidence" value="ECO:0000315"/>
    <property type="project" value="BHF-UCL"/>
</dbReference>
<dbReference type="GO" id="GO:0016477">
    <property type="term" value="P:cell migration"/>
    <property type="evidence" value="ECO:0000315"/>
    <property type="project" value="BHF-UCL"/>
</dbReference>
<dbReference type="GO" id="GO:0003273">
    <property type="term" value="P:cell migration involved in endocardial cushion formation"/>
    <property type="evidence" value="ECO:0007669"/>
    <property type="project" value="Ensembl"/>
</dbReference>
<dbReference type="GO" id="GO:0048870">
    <property type="term" value="P:cell motility"/>
    <property type="evidence" value="ECO:0000315"/>
    <property type="project" value="BHF-UCL"/>
</dbReference>
<dbReference type="GO" id="GO:0022009">
    <property type="term" value="P:central nervous system vasculogenesis"/>
    <property type="evidence" value="ECO:0000315"/>
    <property type="project" value="BHF-UCL"/>
</dbReference>
<dbReference type="GO" id="GO:0070483">
    <property type="term" value="P:detection of hypoxia"/>
    <property type="evidence" value="ECO:0000314"/>
    <property type="project" value="BHF-UCL"/>
</dbReference>
<dbReference type="GO" id="GO:0035912">
    <property type="term" value="P:dorsal aorta morphogenesis"/>
    <property type="evidence" value="ECO:0000250"/>
    <property type="project" value="BHF-UCL"/>
</dbReference>
<dbReference type="GO" id="GO:0003203">
    <property type="term" value="P:endocardial cushion morphogenesis"/>
    <property type="evidence" value="ECO:0000250"/>
    <property type="project" value="BHF-UCL"/>
</dbReference>
<dbReference type="GO" id="GO:0003198">
    <property type="term" value="P:epithelial to mesenchymal transition involved in endocardial cushion formation"/>
    <property type="evidence" value="ECO:0000250"/>
    <property type="project" value="BHF-UCL"/>
</dbReference>
<dbReference type="GO" id="GO:0022617">
    <property type="term" value="P:extracellular matrix disassembly"/>
    <property type="evidence" value="ECO:0000315"/>
    <property type="project" value="BHF-UCL"/>
</dbReference>
<dbReference type="GO" id="GO:0001947">
    <property type="term" value="P:heart looping"/>
    <property type="evidence" value="ECO:0000250"/>
    <property type="project" value="BHF-UCL"/>
</dbReference>
<dbReference type="GO" id="GO:0030336">
    <property type="term" value="P:negative regulation of cell migration"/>
    <property type="evidence" value="ECO:0000314"/>
    <property type="project" value="BHF-UCL"/>
</dbReference>
<dbReference type="GO" id="GO:0001937">
    <property type="term" value="P:negative regulation of endothelial cell proliferation"/>
    <property type="evidence" value="ECO:0000315"/>
    <property type="project" value="BHF-UCL"/>
</dbReference>
<dbReference type="GO" id="GO:0010629">
    <property type="term" value="P:negative regulation of gene expression"/>
    <property type="evidence" value="ECO:0000250"/>
    <property type="project" value="BHF-UCL"/>
</dbReference>
<dbReference type="GO" id="GO:0060392">
    <property type="term" value="P:negative regulation of SMAD protein signal transduction"/>
    <property type="evidence" value="ECO:0000315"/>
    <property type="project" value="BHF-UCL"/>
</dbReference>
<dbReference type="GO" id="GO:0000122">
    <property type="term" value="P:negative regulation of transcription by RNA polymerase II"/>
    <property type="evidence" value="ECO:0000314"/>
    <property type="project" value="BHF-UCL"/>
</dbReference>
<dbReference type="GO" id="GO:0030512">
    <property type="term" value="P:negative regulation of transforming growth factor beta receptor signaling pathway"/>
    <property type="evidence" value="ECO:0000304"/>
    <property type="project" value="BHF-UCL"/>
</dbReference>
<dbReference type="GO" id="GO:0003148">
    <property type="term" value="P:outflow tract septum morphogenesis"/>
    <property type="evidence" value="ECO:0000250"/>
    <property type="project" value="BHF-UCL"/>
</dbReference>
<dbReference type="GO" id="GO:0045766">
    <property type="term" value="P:positive regulation of angiogenesis"/>
    <property type="evidence" value="ECO:0007669"/>
    <property type="project" value="Ensembl"/>
</dbReference>
<dbReference type="GO" id="GO:0030513">
    <property type="term" value="P:positive regulation of BMP signaling pathway"/>
    <property type="evidence" value="ECO:0000314"/>
    <property type="project" value="BHF-UCL"/>
</dbReference>
<dbReference type="GO" id="GO:1905007">
    <property type="term" value="P:positive regulation of epithelial to mesenchymal transition involved in endocardial cushion formation"/>
    <property type="evidence" value="ECO:0000250"/>
    <property type="project" value="BHF-UCL"/>
</dbReference>
<dbReference type="GO" id="GO:0051897">
    <property type="term" value="P:positive regulation of phosphatidylinositol 3-kinase/protein kinase B signal transduction"/>
    <property type="evidence" value="ECO:0000316"/>
    <property type="project" value="BHF-UCL"/>
</dbReference>
<dbReference type="GO" id="GO:0060391">
    <property type="term" value="P:positive regulation of SMAD protein signal transduction"/>
    <property type="evidence" value="ECO:0000314"/>
    <property type="project" value="BHF-UCL"/>
</dbReference>
<dbReference type="GO" id="GO:0003084">
    <property type="term" value="P:positive regulation of systemic arterial blood pressure"/>
    <property type="evidence" value="ECO:0000315"/>
    <property type="project" value="BHF-UCL"/>
</dbReference>
<dbReference type="GO" id="GO:0045944">
    <property type="term" value="P:positive regulation of transcription by RNA polymerase II"/>
    <property type="evidence" value="ECO:0000314"/>
    <property type="project" value="BHF-UCL"/>
</dbReference>
<dbReference type="GO" id="GO:1905065">
    <property type="term" value="P:positive regulation of vascular associated smooth muscle cell differentiation"/>
    <property type="evidence" value="ECO:0000250"/>
    <property type="project" value="BHF-UCL"/>
</dbReference>
<dbReference type="GO" id="GO:0030155">
    <property type="term" value="P:regulation of cell adhesion"/>
    <property type="evidence" value="ECO:0000304"/>
    <property type="project" value="BHF-UCL"/>
</dbReference>
<dbReference type="GO" id="GO:0042127">
    <property type="term" value="P:regulation of cell population proliferation"/>
    <property type="evidence" value="ECO:0000304"/>
    <property type="project" value="BHF-UCL"/>
</dbReference>
<dbReference type="GO" id="GO:0006355">
    <property type="term" value="P:regulation of DNA-templated transcription"/>
    <property type="evidence" value="ECO:0000315"/>
    <property type="project" value="HGNC-UCL"/>
</dbReference>
<dbReference type="GO" id="GO:0042325">
    <property type="term" value="P:regulation of phosphorylation"/>
    <property type="evidence" value="ECO:0000304"/>
    <property type="project" value="BHF-UCL"/>
</dbReference>
<dbReference type="GO" id="GO:0017015">
    <property type="term" value="P:regulation of transforming growth factor beta receptor signaling pathway"/>
    <property type="evidence" value="ECO:0000314"/>
    <property type="project" value="HGNC-UCL"/>
</dbReference>
<dbReference type="GO" id="GO:0001666">
    <property type="term" value="P:response to hypoxia"/>
    <property type="evidence" value="ECO:0000314"/>
    <property type="project" value="BHF-UCL"/>
</dbReference>
<dbReference type="GO" id="GO:0048745">
    <property type="term" value="P:smooth muscle tissue development"/>
    <property type="evidence" value="ECO:0000250"/>
    <property type="project" value="BHF-UCL"/>
</dbReference>
<dbReference type="GO" id="GO:0007179">
    <property type="term" value="P:transforming growth factor beta receptor signaling pathway"/>
    <property type="evidence" value="ECO:0000314"/>
    <property type="project" value="BHF-UCL"/>
</dbReference>
<dbReference type="GO" id="GO:0097084">
    <property type="term" value="P:vascular associated smooth muscle cell development"/>
    <property type="evidence" value="ECO:0000250"/>
    <property type="project" value="BHF-UCL"/>
</dbReference>
<dbReference type="GO" id="GO:0001570">
    <property type="term" value="P:vasculogenesis"/>
    <property type="evidence" value="ECO:0000315"/>
    <property type="project" value="BHF-UCL"/>
</dbReference>
<dbReference type="GO" id="GO:0048845">
    <property type="term" value="P:venous blood vessel morphogenesis"/>
    <property type="evidence" value="ECO:0000250"/>
    <property type="project" value="BHF-UCL"/>
</dbReference>
<dbReference type="GO" id="GO:0003222">
    <property type="term" value="P:ventricular trabecula myocardium morphogenesis"/>
    <property type="evidence" value="ECO:0000250"/>
    <property type="project" value="BHF-UCL"/>
</dbReference>
<dbReference type="GO" id="GO:0042060">
    <property type="term" value="P:wound healing"/>
    <property type="evidence" value="ECO:0000315"/>
    <property type="project" value="BHF-UCL"/>
</dbReference>
<dbReference type="PANTHER" id="PTHR14002:SF1">
    <property type="entry name" value="ENDOGLIN"/>
    <property type="match status" value="1"/>
</dbReference>
<dbReference type="PANTHER" id="PTHR14002">
    <property type="entry name" value="ENDOGLIN/TGF-BETA RECEPTOR TYPE III"/>
    <property type="match status" value="1"/>
</dbReference>
<name>EGLN_HUMAN</name>
<reference key="1">
    <citation type="journal article" date="1993" name="Eur. J. Immunol.">
        <title>Identification and expression of two forms of the human transforming growth factor-beta-binding protein endoglin with distinct cytoplasmic regions.</title>
        <authorList>
            <person name="Bellon T."/>
            <person name="Corbi A."/>
            <person name="Lastres P."/>
            <person name="Cales C."/>
            <person name="Cebrian M."/>
            <person name="Vera S."/>
            <person name="Cheifetz S."/>
            <person name="Massague J."/>
            <person name="Letarte M."/>
            <person name="Bernabeu C."/>
        </authorList>
    </citation>
    <scope>NUCLEOTIDE SEQUENCE [MRNA] (ISOFORM SHORT)</scope>
    <scope>FUNCTION</scope>
    <scope>SUBCELLULAR LOCATION</scope>
    <scope>SUBUNIT</scope>
    <scope>ALTERNATIVE SPLICING</scope>
</reference>
<reference key="2">
    <citation type="journal article" date="2004" name="Nature">
        <title>DNA sequence and analysis of human chromosome 9.</title>
        <authorList>
            <person name="Humphray S.J."/>
            <person name="Oliver K."/>
            <person name="Hunt A.R."/>
            <person name="Plumb R.W."/>
            <person name="Loveland J.E."/>
            <person name="Howe K.L."/>
            <person name="Andrews T.D."/>
            <person name="Searle S."/>
            <person name="Hunt S.E."/>
            <person name="Scott C.E."/>
            <person name="Jones M.C."/>
            <person name="Ainscough R."/>
            <person name="Almeida J.P."/>
            <person name="Ambrose K.D."/>
            <person name="Ashwell R.I.S."/>
            <person name="Babbage A.K."/>
            <person name="Babbage S."/>
            <person name="Bagguley C.L."/>
            <person name="Bailey J."/>
            <person name="Banerjee R."/>
            <person name="Barker D.J."/>
            <person name="Barlow K.F."/>
            <person name="Bates K."/>
            <person name="Beasley H."/>
            <person name="Beasley O."/>
            <person name="Bird C.P."/>
            <person name="Bray-Allen S."/>
            <person name="Brown A.J."/>
            <person name="Brown J.Y."/>
            <person name="Burford D."/>
            <person name="Burrill W."/>
            <person name="Burton J."/>
            <person name="Carder C."/>
            <person name="Carter N.P."/>
            <person name="Chapman J.C."/>
            <person name="Chen Y."/>
            <person name="Clarke G."/>
            <person name="Clark S.Y."/>
            <person name="Clee C.M."/>
            <person name="Clegg S."/>
            <person name="Collier R.E."/>
            <person name="Corby N."/>
            <person name="Crosier M."/>
            <person name="Cummings A.T."/>
            <person name="Davies J."/>
            <person name="Dhami P."/>
            <person name="Dunn M."/>
            <person name="Dutta I."/>
            <person name="Dyer L.W."/>
            <person name="Earthrowl M.E."/>
            <person name="Faulkner L."/>
            <person name="Fleming C.J."/>
            <person name="Frankish A."/>
            <person name="Frankland J.A."/>
            <person name="French L."/>
            <person name="Fricker D.G."/>
            <person name="Garner P."/>
            <person name="Garnett J."/>
            <person name="Ghori J."/>
            <person name="Gilbert J.G.R."/>
            <person name="Glison C."/>
            <person name="Grafham D.V."/>
            <person name="Gribble S."/>
            <person name="Griffiths C."/>
            <person name="Griffiths-Jones S."/>
            <person name="Grocock R."/>
            <person name="Guy J."/>
            <person name="Hall R.E."/>
            <person name="Hammond S."/>
            <person name="Harley J.L."/>
            <person name="Harrison E.S.I."/>
            <person name="Hart E.A."/>
            <person name="Heath P.D."/>
            <person name="Henderson C.D."/>
            <person name="Hopkins B.L."/>
            <person name="Howard P.J."/>
            <person name="Howden P.J."/>
            <person name="Huckle E."/>
            <person name="Johnson C."/>
            <person name="Johnson D."/>
            <person name="Joy A.A."/>
            <person name="Kay M."/>
            <person name="Keenan S."/>
            <person name="Kershaw J.K."/>
            <person name="Kimberley A.M."/>
            <person name="King A."/>
            <person name="Knights A."/>
            <person name="Laird G.K."/>
            <person name="Langford C."/>
            <person name="Lawlor S."/>
            <person name="Leongamornlert D.A."/>
            <person name="Leversha M."/>
            <person name="Lloyd C."/>
            <person name="Lloyd D.M."/>
            <person name="Lovell J."/>
            <person name="Martin S."/>
            <person name="Mashreghi-Mohammadi M."/>
            <person name="Matthews L."/>
            <person name="McLaren S."/>
            <person name="McLay K.E."/>
            <person name="McMurray A."/>
            <person name="Milne S."/>
            <person name="Nickerson T."/>
            <person name="Nisbett J."/>
            <person name="Nordsiek G."/>
            <person name="Pearce A.V."/>
            <person name="Peck A.I."/>
            <person name="Porter K.M."/>
            <person name="Pandian R."/>
            <person name="Pelan S."/>
            <person name="Phillimore B."/>
            <person name="Povey S."/>
            <person name="Ramsey Y."/>
            <person name="Rand V."/>
            <person name="Scharfe M."/>
            <person name="Sehra H.K."/>
            <person name="Shownkeen R."/>
            <person name="Sims S.K."/>
            <person name="Skuce C.D."/>
            <person name="Smith M."/>
            <person name="Steward C.A."/>
            <person name="Swarbreck D."/>
            <person name="Sycamore N."/>
            <person name="Tester J."/>
            <person name="Thorpe A."/>
            <person name="Tracey A."/>
            <person name="Tromans A."/>
            <person name="Thomas D.W."/>
            <person name="Wall M."/>
            <person name="Wallis J.M."/>
            <person name="West A.P."/>
            <person name="Whitehead S.L."/>
            <person name="Willey D.L."/>
            <person name="Williams S.A."/>
            <person name="Wilming L."/>
            <person name="Wray P.W."/>
            <person name="Young L."/>
            <person name="Ashurst J.L."/>
            <person name="Coulson A."/>
            <person name="Blocker H."/>
            <person name="Durbin R.M."/>
            <person name="Sulston J.E."/>
            <person name="Hubbard T."/>
            <person name="Jackson M.J."/>
            <person name="Bentley D.R."/>
            <person name="Beck S."/>
            <person name="Rogers J."/>
            <person name="Dunham I."/>
        </authorList>
    </citation>
    <scope>NUCLEOTIDE SEQUENCE [LARGE SCALE GENOMIC DNA]</scope>
</reference>
<reference key="3">
    <citation type="submission" date="2005-07" db="EMBL/GenBank/DDBJ databases">
        <authorList>
            <person name="Mural R.J."/>
            <person name="Istrail S."/>
            <person name="Sutton G.G."/>
            <person name="Florea L."/>
            <person name="Halpern A.L."/>
            <person name="Mobarry C.M."/>
            <person name="Lippert R."/>
            <person name="Walenz B."/>
            <person name="Shatkay H."/>
            <person name="Dew I."/>
            <person name="Miller J.R."/>
            <person name="Flanigan M.J."/>
            <person name="Edwards N.J."/>
            <person name="Bolanos R."/>
            <person name="Fasulo D."/>
            <person name="Halldorsson B.V."/>
            <person name="Hannenhalli S."/>
            <person name="Turner R."/>
            <person name="Yooseph S."/>
            <person name="Lu F."/>
            <person name="Nusskern D.R."/>
            <person name="Shue B.C."/>
            <person name="Zheng X.H."/>
            <person name="Zhong F."/>
            <person name="Delcher A.L."/>
            <person name="Huson D.H."/>
            <person name="Kravitz S.A."/>
            <person name="Mouchard L."/>
            <person name="Reinert K."/>
            <person name="Remington K.A."/>
            <person name="Clark A.G."/>
            <person name="Waterman M.S."/>
            <person name="Eichler E.E."/>
            <person name="Adams M.D."/>
            <person name="Hunkapiller M.W."/>
            <person name="Myers E.W."/>
            <person name="Venter J.C."/>
        </authorList>
    </citation>
    <scope>NUCLEOTIDE SEQUENCE [LARGE SCALE GENOMIC DNA]</scope>
</reference>
<reference key="4">
    <citation type="journal article" date="1990" name="J. Biol. Chem.">
        <title>Primary structure of endoglin, an RGD-containing glycoprotein of human endothelial cells.</title>
        <authorList>
            <person name="Gougos A."/>
            <person name="Letarte M."/>
        </authorList>
    </citation>
    <scope>NUCLEOTIDE SEQUENCE [GENOMIC DNA / MRNA] OF 14-658</scope>
    <scope>PROTEIN SEQUENCE OF 26-36 (ISOFORM LONG)</scope>
    <scope>SUBCELLULAR LOCATION</scope>
    <scope>TISSUE SPECIFICITY</scope>
    <source>
        <tissue>Umbilical vein</tissue>
    </source>
</reference>
<reference key="5">
    <citation type="journal article" date="1994" name="Nat. Genet.">
        <title>Endoglin, a TGF-beta binding protein of endothelial cells, is the gene for hereditary haemorrhagic telangiectasia type 1.</title>
        <authorList>
            <person name="McAllister K.A."/>
            <person name="Grogg K.M."/>
            <person name="Johnson D.W."/>
            <person name="Gallione C.J."/>
            <person name="Baldwin M.A."/>
            <person name="Jackson C.E."/>
            <person name="Helmbold E.A."/>
            <person name="Markel D.S."/>
            <person name="McKinnon W.C."/>
            <person name="Murrell J."/>
            <person name="McCormick M.K."/>
            <person name="Pericak-Vance M.A."/>
            <person name="Heutink P."/>
            <person name="Oostra B.A."/>
            <person name="Haitjema T."/>
            <person name="Westerman C.J."/>
            <person name="Porteous M.E."/>
            <person name="Guttmacher A.E."/>
            <person name="Letarte M."/>
            <person name="Marchuk D.A."/>
        </authorList>
    </citation>
    <scope>NUCLEOTIDE SEQUENCE [GENOMIC DNA] OF 122-378</scope>
    <scope>FUNCTION</scope>
    <scope>INVOLVEMENT IN HHT1</scope>
</reference>
<reference key="6">
    <citation type="journal article" date="1992" name="J. Biol. Chem.">
        <title>Endoglin is a component of the transforming growth factor-beta receptor system in human endothelial cells.</title>
        <authorList>
            <person name="Cheifetz S."/>
            <person name="Bellon T."/>
            <person name="Cales C."/>
            <person name="Vera S."/>
            <person name="Bernabeu C."/>
            <person name="Massague J."/>
            <person name="Letarte M."/>
        </authorList>
    </citation>
    <scope>SUBUNIT</scope>
    <scope>SUBCELLULAR LOCATION</scope>
</reference>
<reference key="7">
    <citation type="journal article" date="2006" name="J. Biol. Chem.">
        <title>Identification of Tctex2beta, a novel dynein light chain family member that interacts with different transforming growth factor-beta receptors.</title>
        <authorList>
            <person name="Meng Q.-J."/>
            <person name="Lux A."/>
            <person name="Holloschi A."/>
            <person name="Li J."/>
            <person name="Hughes J.M.X."/>
            <person name="Foerg T."/>
            <person name="McCarthy J.E.G."/>
            <person name="Heagerty A.M."/>
            <person name="Kioschis P."/>
            <person name="Hafner M."/>
            <person name="Garland J.M."/>
        </authorList>
    </citation>
    <scope>INTERACTION WITH DYNLT4</scope>
</reference>
<reference key="8">
    <citation type="journal article" date="2007" name="J. Biol. Chem.">
        <title>The interaction of endoglin with beta-arrestin2 regulates transforming growth factor-beta-mediated ERK activation and migration in endothelial cells.</title>
        <authorList>
            <person name="Lee N.Y."/>
            <person name="Blobe G.C."/>
        </authorList>
    </citation>
    <scope>INTERACTION WITH ARRB2</scope>
    <scope>SUBCELLULAR LOCATION</scope>
    <scope>FUNCTION</scope>
    <scope>MUTAGENESIS OF THR-650</scope>
</reference>
<reference key="9">
    <citation type="journal article" date="2009" name="J. Proteome Res.">
        <title>Glycoproteomics analysis of human liver tissue by combination of multiple enzyme digestion and hydrazide chemistry.</title>
        <authorList>
            <person name="Chen R."/>
            <person name="Jiang X."/>
            <person name="Sun D."/>
            <person name="Han G."/>
            <person name="Wang F."/>
            <person name="Ye M."/>
            <person name="Wang L."/>
            <person name="Zou H."/>
        </authorList>
    </citation>
    <scope>GLYCOSYLATION [LARGE SCALE ANALYSIS] AT ASN-134</scope>
    <source>
        <tissue>Liver</tissue>
    </source>
</reference>
<reference key="10">
    <citation type="journal article" date="2011" name="J. Biol. Chem.">
        <title>Soluble endoglin specifically binds bone morphogenetic proteins 9 and 10 via its orphan domain, inhibits blood vessel formation, and suppresses tumor growth.</title>
        <authorList>
            <person name="Castonguay R."/>
            <person name="Werner E.D."/>
            <person name="Matthews R.G."/>
            <person name="Presman E."/>
            <person name="Mulivor A.W."/>
            <person name="Solban N."/>
            <person name="Sako D."/>
            <person name="Pearsall R.S."/>
            <person name="Underwood K.W."/>
            <person name="Seehra J."/>
            <person name="Kumar R."/>
            <person name="Grinberg A.V."/>
        </authorList>
    </citation>
    <scope>FUNCTION</scope>
    <scope>INTERACTION WITH GDF2 AND BMP10</scope>
</reference>
<reference key="11">
    <citation type="journal article" date="2012" name="PLoS ONE">
        <title>Structural and functional insights into endoglin ligand recognition and binding.</title>
        <authorList>
            <person name="Alt A."/>
            <person name="Miguel-Romero L."/>
            <person name="Donderis J."/>
            <person name="Aristorena M."/>
            <person name="Blanco F.J."/>
            <person name="Round A."/>
            <person name="Rubio V."/>
            <person name="Bernabeu C."/>
            <person name="Marina A."/>
        </authorList>
    </citation>
    <scope>INTERACTION WITH GDF2 AND ACVRL1</scope>
    <scope>SUBUNIT</scope>
</reference>
<reference key="12">
    <citation type="journal article" date="2012" name="PLoS ONE">
        <title>Endoglin requirement for BMP9 signaling in endothelial cells reveals new mechanism of action for selective anti-endoglin antibodies.</title>
        <authorList>
            <person name="Nolan-Stevaux O."/>
            <person name="Zhong W."/>
            <person name="Culp S."/>
            <person name="Shaffer K."/>
            <person name="Hoover J."/>
            <person name="Wickramasinghe D."/>
            <person name="Ruefli-Brasse A."/>
        </authorList>
    </citation>
    <scope>FUNCTION</scope>
</reference>
<reference evidence="32 33 34" key="13">
    <citation type="journal article" date="2017" name="Cell Rep.">
        <title>Structural Basis of the Human Endoglin-BMP9 Interaction: Insights into BMP Signaling and HHT1.</title>
        <authorList>
            <person name="Saito T."/>
            <person name="Bokhove M."/>
            <person name="Croci R."/>
            <person name="Zamora-Caballero S."/>
            <person name="Han L."/>
            <person name="Letarte M."/>
            <person name="de Sanctis D."/>
            <person name="Jovine L."/>
        </authorList>
    </citation>
    <scope>X-RAY CRYSTALLOGRAPHY (2.42 ANGSTROMS) OF 26-337</scope>
    <scope>X-RAY CRYSTALLOGRAPHY (2.70 ANGSTROMS) OF 338-581</scope>
    <scope>X-RAY CRYSTALLOGRAPHY (4.45 ANGSTROMS) OF 26-337 IN COMPLEX WITH GDF2</scope>
    <scope>INTERACTION WITH GDF2 AND ACVRL1</scope>
    <scope>SUBUNIT</scope>
    <scope>DOMAIN</scope>
    <scope>DISULFIDE BONDS</scope>
    <scope>MUTAGENESIS OF ASP-246; 270-GLN-ILE-271; TYR-277; SER-278; PHE-282; PHE-290; CYS-350; CYS-382 AND CYS-516</scope>
</reference>
<reference key="14">
    <citation type="journal article" date="1997" name="Am. J. Hum. Genet.">
        <title>Characterization of endoglin and identification of novel mutations in hereditary hemorrhagic telangiectasia.</title>
        <authorList>
            <person name="Shovlin C.L."/>
            <person name="Hughes J.M.B."/>
            <person name="Scott J."/>
            <person name="Seidman C.E."/>
            <person name="Seidman J.G."/>
        </authorList>
    </citation>
    <scope>VARIANT HHT1 192-ARG--PRO-198 DEL</scope>
    <scope>VARIANT MET-5</scope>
</reference>
<reference key="15">
    <citation type="journal article" date="1997" name="Thromb. Haemost.">
        <title>A novel missense mutation in the endoglin gene in hereditary hemorrhagic telangiectasia.</title>
        <authorList>
            <person name="Yamaguchi H."/>
            <person name="Azuma H."/>
            <person name="Shigekiyo T."/>
            <person name="Inoue H."/>
            <person name="Saito S."/>
        </authorList>
    </citation>
    <scope>VARIANT HHT1 ASP-160</scope>
</reference>
<reference key="16">
    <citation type="journal article" date="1998" name="Hum. Mutat.">
        <title>Mutation and expression analysis of the endoglin gene in hereditary hemorrhagic telangiectasia reveals null alleles.</title>
        <authorList>
            <person name="Gallione C.J."/>
            <person name="Klaus D.J."/>
            <person name="Yeh E.Y."/>
            <person name="Stenzel T.T."/>
            <person name="Xue Y."/>
            <person name="Anthony K.B."/>
            <person name="McAllister K.A."/>
            <person name="Baldwin M.A."/>
            <person name="Berg J.N."/>
            <person name="Lux A."/>
            <person name="Smith J.D."/>
            <person name="Vary C.P.H."/>
            <person name="Craigen W.J."/>
            <person name="Westermann C.J.J."/>
            <person name="Warner M.L."/>
            <person name="Miller Y.E."/>
            <person name="Jackson C.E."/>
            <person name="Guttmacher A.E."/>
            <person name="Marchuk D.A."/>
        </authorList>
    </citation>
    <scope>VARIANTS HHT1 VAL-52; ARG-53; CYS-149 AND PRO-306</scope>
</reference>
<reference key="17">
    <citation type="journal article" date="1999" name="Hum. Mol. Genet.">
        <title>Expression analysis of four endoglin missense mutations suggests that haploinsufficiency is the predominant mechanism for hereditary hemorrhagic telangiectasia type 1.</title>
        <authorList>
            <person name="Pece-Barbara N."/>
            <person name="Cymerman U."/>
            <person name="Vera S."/>
            <person name="Marchuk D.A."/>
            <person name="Letarte M."/>
        </authorList>
    </citation>
    <scope>VARIANTS HHT1 VAL-52; ARG-53; CYS-149 AND PRO-221</scope>
    <scope>SUBCELLULAR LOCATION</scope>
    <scope>CHARACTERIZATION OF VARIANTS HHT1 VAL-52; ARG-53; CYS-149 AND PRO-221</scope>
</reference>
<reference key="18">
    <citation type="journal article" date="2000" name="Hum. Genet.">
        <title>Two common endoglin mutations in families with hereditary hemorrhagic telangiectasia in the Netherlands Antilles: evidence for a founder effect.</title>
        <authorList>
            <person name="Gallione C.J."/>
            <person name="Scheessele E.A."/>
            <person name="Reinhardt D."/>
            <person name="Duits A.J."/>
            <person name="Berg J.N."/>
            <person name="Westermann C.J.J."/>
            <person name="Marchuk D.A."/>
        </authorList>
    </citation>
    <scope>VARIANT HHT1 VAL-413</scope>
</reference>
<reference key="19">
    <citation type="journal article" date="2000" name="Pediatr. Res.">
        <title>Identification of hereditary hemorrhagic telangiectasia type 1 in newborns by protein expression and mutation analysis of endoglin.</title>
        <authorList>
            <person name="Cymerman U."/>
            <person name="Vera S."/>
            <person name="Pece-Barbara N."/>
            <person name="Bourdeau A."/>
            <person name="White R.I. Jr."/>
            <person name="Dunn J."/>
            <person name="Letarte M."/>
        </authorList>
    </citation>
    <scope>VARIANT HHT1 ARG-53</scope>
    <scope>TISSUE SPECIFICITY</scope>
</reference>
<reference key="20">
    <citation type="journal article" date="2004" name="Hum. Mutat.">
        <title>Molecular screening of ALK1/ACVRL1 and ENG genes in hereditary hemorrhagic telangiectasia in France.</title>
        <authorList>
            <consortium name="French Rendu-Osler network"/>
            <person name="Lesca G."/>
            <person name="Plauchu H."/>
            <person name="Coulet F."/>
            <person name="Lefebvre S."/>
            <person name="Plessis G."/>
            <person name="Odent S."/>
            <person name="Riviere S."/>
            <person name="Leheup B."/>
            <person name="Goizet C."/>
            <person name="Carette M.-F."/>
            <person name="Cordier J.-F."/>
            <person name="Pinson S."/>
            <person name="Soubrier F."/>
            <person name="Calender A."/>
            <person name="Giraud S."/>
        </authorList>
    </citation>
    <scope>VARIANTS HHT1 PRO-8; PHE-49; ARG-107; CYS-207 DEL; THR-263; 232-ARG-THR-233 DEL; ILE-263 DEL; SER-412 AND MET-504</scope>
</reference>
<reference key="21">
    <citation type="journal article" date="2005" name="Hum. Mutat.">
        <title>Hepatic manifestation is associated with ALK1 in hereditary hemorrhagic telangiectasia: identification of five novel ALK1 and one novel ENG mutations.</title>
        <authorList>
            <person name="Kuehl H.K.A."/>
            <person name="Caselitz M."/>
            <person name="Hasenkamp S."/>
            <person name="Wagner S."/>
            <person name="El-Harith E.-H.A."/>
            <person name="Manns M.P."/>
            <person name="Stuhrmann M."/>
        </authorList>
    </citation>
    <scope>VARIANTS HHT1 PRO-221 AND ILE-263 DEL</scope>
    <scope>VARIANT LEU-615</scope>
</reference>
<reference key="22">
    <citation type="journal article" date="2006" name="Hum. Mutat.">
        <title>Novel mutations in ENG and ACVRL1 identified in a series of 200 individuals undergoing clinical genetic testing for hereditary hemorrhagic telangiectasia (HHT): correlation of genotype with phenotype.</title>
        <authorList>
            <person name="Bossler A.D."/>
            <person name="Richards J."/>
            <person name="George C."/>
            <person name="Godmilow L."/>
            <person name="Ganguly A."/>
        </authorList>
    </citation>
    <scope>VARIANTS HHT1 ASP-11; ASP-105; GLU-175; THR-220; ASP-308; SER-363; TRP-437; SER-490; HIS-529; PRO-547 AND ASP-604</scope>
</reference>
<reference key="23">
    <citation type="journal article" date="2006" name="Int. J. Mol. Med.">
        <title>Novel mutations in the ENG and ACVRL1 genes causing hereditary hemorrhagic teleangiectasia.</title>
        <authorList>
            <person name="Argyriou L."/>
            <person name="Twelkemeyer S."/>
            <person name="Panchulidze I."/>
            <person name="Wehner L.E."/>
            <person name="Teske U."/>
            <person name="Engel W."/>
            <person name="Nayernia K."/>
        </authorList>
    </citation>
    <scope>VARIANTS HHT1 193-THR-LEU-194 DELINS VAL-LEU-GLN AND ASP-545</scope>
</reference>
<reference key="24">
    <citation type="journal article" date="2010" name="Hum. Genet.">
        <title>Update on molecular diagnosis of hereditary hemorrhagic telangiectasia.</title>
        <authorList>
            <person name="Richards-Yutz J."/>
            <person name="Grant K."/>
            <person name="Chao E.C."/>
            <person name="Walther S.E."/>
            <person name="Ganguly A."/>
        </authorList>
    </citation>
    <scope>VARIANTS PRO-205; SER-545 AND ALA-561</scope>
    <scope>VARIANTS HHT1 PRO-150; GLN-221; MET-236; GLU-238; SER-263; ARG-269; MET-315; GLU-374; TYR-394; ARG-414; PRO-529; TYR-549 AND ARG-603</scope>
</reference>
<keyword id="KW-0002">3D-structure</keyword>
<keyword id="KW-0025">Alternative splicing</keyword>
<keyword id="KW-0037">Angiogenesis</keyword>
<keyword id="KW-0130">Cell adhesion</keyword>
<keyword id="KW-1003">Cell membrane</keyword>
<keyword id="KW-0903">Direct protein sequencing</keyword>
<keyword id="KW-0225">Disease variant</keyword>
<keyword id="KW-1015">Disulfide bond</keyword>
<keyword id="KW-0325">Glycoprotein</keyword>
<keyword id="KW-0472">Membrane</keyword>
<keyword id="KW-0597">Phosphoprotein</keyword>
<keyword id="KW-1267">Proteomics identification</keyword>
<keyword id="KW-1185">Reference proteome</keyword>
<keyword id="KW-0732">Signal</keyword>
<keyword id="KW-0812">Transmembrane</keyword>
<keyword id="KW-1133">Transmembrane helix</keyword>
<protein>
    <recommendedName>
        <fullName>Endoglin</fullName>
    </recommendedName>
    <cdAntigenName>CD105</cdAntigenName>
</protein>
<sequence length="658" mass="70578">MDRGTLPLAVALLLASCSLSPTSLAETVHCDLQPVGPERGEVTYTTSQVSKGCVAQAPNAILEVHVLFLEFPTGPSQLELTLQASKQNGTWPREVLLVLSVNSSVFLHLQALGIPLHLAYNSSLVTFQEPPGVNTTELPSFPKTQILEWAAERGPITSAAELNDPQSILLRLGQAQGSLSFCMLEASQDMGRTLEWRPRTPALVRGCHLEGVAGHKEAHILRVLPGHSAGPRTVTVKVELSCAPGDLDAVLILQGPPYVSWLIDANHNMQIWTTGEYSFKIFPEKNIRGFKLPDTPQGLLGEARMLNASIVASFVELPLASIVSLHASSCGGRLQTSPAPIQTTPPKDTCSPELLMSLIQTKCADDAMTLVLKKELVAHLKCTITGLTFWDPSCEAEDRGDKFVLRSAYSSCGMQVSASMISNEAVVNILSSSSPQRKKVHCLNMDSLSFQLGLYLSPHFLQASNTIEPGQQSFVQVRVSPSVSEFLLQLDSCHLDLGPEGGTVELIQGRAAKGNCVSLLSPSPEGDPRFSFLLHFYTVPIPKTGTLSCTVALRPKTGSQDQEVHRTVFMRLNIISPDLSGCTSKGLVLPAVLGITFGAFLIGALLTAALWYIYSHTRSPSKREPVVAVAAPASSESSSTNHSIGSTQSTPCSTSSMA</sequence>
<comment type="function">
    <text evidence="1 15 18 20 22 23 29">Vascular endothelium glycoprotein that plays an important role in the regulation of angiogenesis (PubMed:21737454, PubMed:23300529). Required for normal structure and integrity of adult vasculature (PubMed:7894484). Regulates the migration of vascular endothelial cells (PubMed:17540773). Required for normal extraembryonic angiogenesis and for embryonic heart development (By similarity). May regulate endothelial cell shape changes in response to blood flow, which drive vascular remodeling and establishment of normal vascular morphology during angiogenesis (By similarity). May play a critical role in the binding of endothelial cells to integrins and/or other RGD receptors (PubMed:1692830). Acts as a TGF-beta coreceptor and is involved in the TGF-beta/BMP signaling cascade that ultimately leads to the activation of SMAD transcription factors (PubMed:21737454, PubMed:22347366, PubMed:23300529, PubMed:8370410). Required for GDF2/BMP9 signaling through SMAD1 in endothelial cells and modulates TGFB1 signaling through SMAD3 (PubMed:21737454, PubMed:22347366, PubMed:23300529).</text>
</comment>
<comment type="subunit">
    <text evidence="8 14 15 18 19 21 23">Homodimer; disulfide-linked (PubMed:1326540, PubMed:21737454, PubMed:22347366, PubMed:28564608, PubMed:8370410). Forms a heteromeric complex with the signaling receptors for transforming growth factor-beta: TGFBR1 and/or TGFBR2 (PubMed:1326540). It is able to bind TGFB1 and TGFB2 with high affinity, but not TGFB3 (PubMed:1326540, PubMed:8370410). Interacts with GDF2, forming a heterotetramer with a 2:2 stoichiometry (PubMed:21737454, PubMed:22347366, PubMed:28564608). Interacts with ACVRL1 (PubMed:22347366, PubMed:28564608). Can form a heteromeric complex with GDF2 and ACVRL1 (PubMed:28564608). Interacts with BMP10 (PubMed:21737454). Interacts with DYNLT4 (PubMed:16982625). Interacts with ARRB2 (PubMed:17540773).</text>
</comment>
<comment type="interaction">
    <interactant intactId="EBI-2834630">
        <id>P17813</id>
    </interactant>
    <interactant intactId="EBI-2834630">
        <id>P17813</id>
        <label>ENG</label>
    </interactant>
    <organismsDiffer>false</organismsDiffer>
    <experiments>2</experiments>
</comment>
<comment type="interaction">
    <interactant intactId="EBI-2834630">
        <id>P17813</id>
    </interactant>
    <interactant intactId="EBI-16227344">
        <id>PRO_0000033903</id>
        <label>GDF2</label>
        <dbReference type="UniProtKB" id="Q9UK05"/>
    </interactant>
    <organismsDiffer>false</organismsDiffer>
    <experiments>10</experiments>
</comment>
<comment type="interaction">
    <interactant intactId="EBI-2834630">
        <id>P17813</id>
    </interactant>
    <interactant intactId="EBI-1382311">
        <id>P08648</id>
        <label>ITGA5</label>
    </interactant>
    <organismsDiffer>false</organismsDiffer>
    <experiments>4</experiments>
</comment>
<comment type="interaction">
    <interactant intactId="EBI-2834630">
        <id>P17813</id>
    </interactant>
    <interactant intactId="EBI-703066">
        <id>P05556</id>
        <label>ITGB1</label>
    </interactant>
    <organismsDiffer>false</organismsDiffer>
    <experiments>3</experiments>
</comment>
<comment type="interaction">
    <interactant intactId="EBI-2834630">
        <id>P17813</id>
    </interactant>
    <interactant intactId="EBI-1170392">
        <id>P17931</id>
        <label>LGALS3</label>
    </interactant>
    <organismsDiffer>false</organismsDiffer>
    <experiments>5</experiments>
</comment>
<comment type="interaction">
    <interactant intactId="EBI-2834630">
        <id>P17813</id>
    </interactant>
    <interactant intactId="EBI-779636">
        <id>P01137</id>
        <label>TGFB1</label>
    </interactant>
    <organismsDiffer>false</organismsDiffer>
    <experiments>2</experiments>
</comment>
<comment type="interaction">
    <interactant intactId="EBI-2834630">
        <id>P17813</id>
    </interactant>
    <interactant intactId="EBI-81290">
        <id>P19474</id>
        <label>TRIM21</label>
    </interactant>
    <organismsDiffer>false</organismsDiffer>
    <experiments>6</experiments>
</comment>
<comment type="interaction">
    <interactant intactId="EBI-16065304">
        <id>P17813-1</id>
    </interactant>
    <interactant intactId="EBI-9083443">
        <id>P02750</id>
        <label>LRG1</label>
    </interactant>
    <organismsDiffer>false</organismsDiffer>
    <experiments>4</experiments>
</comment>
<comment type="subcellular location">
    <subcellularLocation>
        <location evidence="5 8 13 15 23">Cell membrane</location>
        <topology evidence="29 31">Single-pass type I membrane protein</topology>
    </subcellularLocation>
</comment>
<comment type="alternative products">
    <event type="alternative splicing"/>
    <isoform>
        <id>P17813-1</id>
        <name>Long</name>
        <sequence type="displayed"/>
    </isoform>
    <isoform>
        <id>P17813-2</id>
        <name>Short</name>
        <sequence type="described" ref="VSP_004233"/>
    </isoform>
</comment>
<comment type="tissue specificity">
    <text evidence="6 13">Detected on umbilical veil endothelial cells (PubMed:10625079). Detected in placenta (at protein level) (PubMed:1692830). Detected on endothelial cells (PubMed:1692830).</text>
</comment>
<comment type="domain">
    <text evidence="21">The ZP domain mediates dimerization.</text>
</comment>
<comment type="domain">
    <text evidence="21">The N-terminal OR region is composed of two intertwined domains (OR1 and OR2) with a common, novel fold. Each contains 12 beta-strands that form a parallel beta-helix-like structure, plus a single alpha-helix. The OR1 region mediates interaction with GDF2.</text>
</comment>
<comment type="disease" evidence="5 6 7 9 10 11 12 17 22 24 25 26">
    <disease id="DI-01716">
        <name>Telangiectasia, hereditary hemorrhagic, 1</name>
        <acronym>HHT1</acronym>
        <description>A multisystemic vascular dysplasia leading to dilation of permanent blood vessels and arteriovenous malformations of skin, mucosa, and viscera. The disease is characterized by recurrent epistaxis and gastro-intestinal hemorrhage. Visceral involvement includes arteriovenous malformations of the lung, liver, and brain.</description>
        <dbReference type="MIM" id="187300"/>
    </disease>
    <text>The disease is caused by variants affecting the gene represented in this entry.</text>
</comment>
<comment type="online information" name="Atlas of Genetics and Cytogenetics in Oncology and Haematology">
    <link uri="https://atlasgeneticsoncology.org/gene/40452/ENG"/>
</comment>
<comment type="online information" name="Hereditary Hemorrhagic Telangiectasia and ENG">
    <link uri="http://arup.utah.edu/database/ENG/ENG_welcome.php"/>
</comment>
<proteinExistence type="evidence at protein level"/>
<gene>
    <name type="primary">ENG</name>
    <name type="synonym">END</name>
</gene>